<name>IF2P_THEAC</name>
<dbReference type="EMBL" id="AL445066">
    <property type="protein sequence ID" value="CAC12239.1"/>
    <property type="molecule type" value="Genomic_DNA"/>
</dbReference>
<dbReference type="RefSeq" id="WP_010901522.1">
    <property type="nucleotide sequence ID" value="NC_002578.1"/>
</dbReference>
<dbReference type="SMR" id="Q9HJ60"/>
<dbReference type="FunCoup" id="Q9HJ60">
    <property type="interactions" value="88"/>
</dbReference>
<dbReference type="STRING" id="273075.gene:9572333"/>
<dbReference type="PaxDb" id="273075-Ta1112"/>
<dbReference type="EnsemblBacteria" id="CAC12239">
    <property type="protein sequence ID" value="CAC12239"/>
    <property type="gene ID" value="CAC12239"/>
</dbReference>
<dbReference type="KEGG" id="tac:Ta1112"/>
<dbReference type="eggNOG" id="arCOG01560">
    <property type="taxonomic scope" value="Archaea"/>
</dbReference>
<dbReference type="HOGENOM" id="CLU_002656_3_3_2"/>
<dbReference type="InParanoid" id="Q9HJ60"/>
<dbReference type="OrthoDB" id="30957at2157"/>
<dbReference type="Proteomes" id="UP000001024">
    <property type="component" value="Chromosome"/>
</dbReference>
<dbReference type="GO" id="GO:0005737">
    <property type="term" value="C:cytoplasm"/>
    <property type="evidence" value="ECO:0007669"/>
    <property type="project" value="TreeGrafter"/>
</dbReference>
<dbReference type="GO" id="GO:0005525">
    <property type="term" value="F:GTP binding"/>
    <property type="evidence" value="ECO:0007669"/>
    <property type="project" value="UniProtKB-KW"/>
</dbReference>
<dbReference type="GO" id="GO:0003924">
    <property type="term" value="F:GTPase activity"/>
    <property type="evidence" value="ECO:0007669"/>
    <property type="project" value="UniProtKB-UniRule"/>
</dbReference>
<dbReference type="GO" id="GO:0003743">
    <property type="term" value="F:translation initiation factor activity"/>
    <property type="evidence" value="ECO:0007669"/>
    <property type="project" value="UniProtKB-UniRule"/>
</dbReference>
<dbReference type="CDD" id="cd03703">
    <property type="entry name" value="aeIF5B_II"/>
    <property type="match status" value="1"/>
</dbReference>
<dbReference type="CDD" id="cd16266">
    <property type="entry name" value="IF2_aeIF5B_IV"/>
    <property type="match status" value="1"/>
</dbReference>
<dbReference type="CDD" id="cd01887">
    <property type="entry name" value="IF2_eIF5B"/>
    <property type="match status" value="1"/>
</dbReference>
<dbReference type="FunFam" id="3.40.50.300:FF:000112">
    <property type="entry name" value="Eukaryotic translation initiation factor 5B"/>
    <property type="match status" value="1"/>
</dbReference>
<dbReference type="FunFam" id="3.40.50.10050:FF:000001">
    <property type="entry name" value="Translation initiation factor IF-2"/>
    <property type="match status" value="1"/>
</dbReference>
<dbReference type="Gene3D" id="3.40.50.300">
    <property type="entry name" value="P-loop containing nucleotide triphosphate hydrolases"/>
    <property type="match status" value="1"/>
</dbReference>
<dbReference type="Gene3D" id="2.40.30.10">
    <property type="entry name" value="Translation factors"/>
    <property type="match status" value="2"/>
</dbReference>
<dbReference type="Gene3D" id="3.40.50.10050">
    <property type="entry name" value="Translation initiation factor IF- 2, domain 3"/>
    <property type="match status" value="1"/>
</dbReference>
<dbReference type="HAMAP" id="MF_00100_A">
    <property type="entry name" value="IF_2_A"/>
    <property type="match status" value="1"/>
</dbReference>
<dbReference type="InterPro" id="IPR029459">
    <property type="entry name" value="EFTU-type"/>
</dbReference>
<dbReference type="InterPro" id="IPR027417">
    <property type="entry name" value="P-loop_NTPase"/>
</dbReference>
<dbReference type="InterPro" id="IPR005225">
    <property type="entry name" value="Small_GTP-bd"/>
</dbReference>
<dbReference type="InterPro" id="IPR000795">
    <property type="entry name" value="T_Tr_GTP-bd_dom"/>
</dbReference>
<dbReference type="InterPro" id="IPR004544">
    <property type="entry name" value="TF_aIF-2_arc"/>
</dbReference>
<dbReference type="InterPro" id="IPR015760">
    <property type="entry name" value="TIF_IF2"/>
</dbReference>
<dbReference type="InterPro" id="IPR023115">
    <property type="entry name" value="TIF_IF2_dom3"/>
</dbReference>
<dbReference type="InterPro" id="IPR036925">
    <property type="entry name" value="TIF_IF2_dom3_sf"/>
</dbReference>
<dbReference type="InterPro" id="IPR009000">
    <property type="entry name" value="Transl_B-barrel_sf"/>
</dbReference>
<dbReference type="NCBIfam" id="TIGR00491">
    <property type="entry name" value="aIF-2"/>
    <property type="match status" value="1"/>
</dbReference>
<dbReference type="NCBIfam" id="NF003078">
    <property type="entry name" value="PRK04004.1"/>
    <property type="match status" value="1"/>
</dbReference>
<dbReference type="NCBIfam" id="TIGR00231">
    <property type="entry name" value="small_GTP"/>
    <property type="match status" value="1"/>
</dbReference>
<dbReference type="PANTHER" id="PTHR43381:SF4">
    <property type="entry name" value="EUKARYOTIC TRANSLATION INITIATION FACTOR 5B"/>
    <property type="match status" value="1"/>
</dbReference>
<dbReference type="PANTHER" id="PTHR43381">
    <property type="entry name" value="TRANSLATION INITIATION FACTOR IF-2-RELATED"/>
    <property type="match status" value="1"/>
</dbReference>
<dbReference type="Pfam" id="PF00009">
    <property type="entry name" value="GTP_EFTU"/>
    <property type="match status" value="1"/>
</dbReference>
<dbReference type="Pfam" id="PF14578">
    <property type="entry name" value="GTP_EFTU_D4"/>
    <property type="match status" value="1"/>
</dbReference>
<dbReference type="Pfam" id="PF11987">
    <property type="entry name" value="IF-2"/>
    <property type="match status" value="1"/>
</dbReference>
<dbReference type="PRINTS" id="PR00315">
    <property type="entry name" value="ELONGATNFCT"/>
</dbReference>
<dbReference type="SUPFAM" id="SSF52156">
    <property type="entry name" value="Initiation factor IF2/eIF5b, domain 3"/>
    <property type="match status" value="1"/>
</dbReference>
<dbReference type="SUPFAM" id="SSF52540">
    <property type="entry name" value="P-loop containing nucleoside triphosphate hydrolases"/>
    <property type="match status" value="1"/>
</dbReference>
<dbReference type="SUPFAM" id="SSF50447">
    <property type="entry name" value="Translation proteins"/>
    <property type="match status" value="1"/>
</dbReference>
<dbReference type="PROSITE" id="PS51722">
    <property type="entry name" value="G_TR_2"/>
    <property type="match status" value="1"/>
</dbReference>
<sequence>MATKSSTSQAVSKLRQPIVCVLGHVDHGKTTLLDLIRGTSVASKEPGGITQRIAATTVDISRILKETEKLNTKGLKIPGLLFIDTPGHVAFSNMRARGGALADLAILVIDINEGIMPQTVESIDILKKFKTPFIIAANKIDLIPFFTDVKTNLFTEFIRKQRQEYVNELDNRIYSIMNKLYEFGLNSDRFDRISDFTKTIAIVPVSAKKNIGVPEILMVLAGLAQRFLEREIEYRDINGHATIIEVRKEESAGITLDAVLYQGTISVGDSIAVNTKNGPAVTKVKALFVNTGKGQRALKEVKKVSAAEGIRVLISDKIDVISGSPMIVVRDNLDQVMKEIEEESKVDIPLSEEGIYVKAEAIGSLEAISYELNKQGIKIKQAQVGDITKRDIMDVSTLPDPINRIIVGFNVSVLPEARDAMSSSDVSIVTGDIIYKIVEDTQKVMDERKKMLLQGRKMSMPVPSRIRILPQYIFRASKPVIVGVRVETGQIKVGDNLIRGDGKYAGTIKSIRNEDVSVRYQDAPAEVAVAIDNVTLNRQIFPDDVLYVDITENVVKELRRAPMEKEIMDTLEEIIRIKRKDNPFWGTRV</sequence>
<protein>
    <recommendedName>
        <fullName>Probable translation initiation factor IF-2</fullName>
    </recommendedName>
</protein>
<feature type="chain" id="PRO_0000137310" description="Probable translation initiation factor IF-2">
    <location>
        <begin position="1"/>
        <end position="589"/>
    </location>
</feature>
<feature type="domain" description="tr-type G">
    <location>
        <begin position="14"/>
        <end position="229"/>
    </location>
</feature>
<feature type="region of interest" description="G1" evidence="1">
    <location>
        <begin position="23"/>
        <end position="30"/>
    </location>
</feature>
<feature type="region of interest" description="G2" evidence="1">
    <location>
        <begin position="48"/>
        <end position="52"/>
    </location>
</feature>
<feature type="region of interest" description="G3" evidence="1">
    <location>
        <begin position="84"/>
        <end position="87"/>
    </location>
</feature>
<feature type="region of interest" description="G4" evidence="1">
    <location>
        <begin position="138"/>
        <end position="141"/>
    </location>
</feature>
<feature type="region of interest" description="G5" evidence="1">
    <location>
        <begin position="206"/>
        <end position="208"/>
    </location>
</feature>
<feature type="binding site" evidence="1">
    <location>
        <begin position="23"/>
        <end position="30"/>
    </location>
    <ligand>
        <name>GTP</name>
        <dbReference type="ChEBI" id="CHEBI:37565"/>
    </ligand>
</feature>
<feature type="binding site" evidence="1">
    <location>
        <begin position="84"/>
        <end position="88"/>
    </location>
    <ligand>
        <name>GTP</name>
        <dbReference type="ChEBI" id="CHEBI:37565"/>
    </ligand>
</feature>
<feature type="binding site" evidence="1">
    <location>
        <begin position="138"/>
        <end position="141"/>
    </location>
    <ligand>
        <name>GTP</name>
        <dbReference type="ChEBI" id="CHEBI:37565"/>
    </ligand>
</feature>
<organism>
    <name type="scientific">Thermoplasma acidophilum (strain ATCC 25905 / DSM 1728 / JCM 9062 / NBRC 15155 / AMRC-C165)</name>
    <dbReference type="NCBI Taxonomy" id="273075"/>
    <lineage>
        <taxon>Archaea</taxon>
        <taxon>Methanobacteriati</taxon>
        <taxon>Thermoplasmatota</taxon>
        <taxon>Thermoplasmata</taxon>
        <taxon>Thermoplasmatales</taxon>
        <taxon>Thermoplasmataceae</taxon>
        <taxon>Thermoplasma</taxon>
    </lineage>
</organism>
<gene>
    <name type="primary">infB</name>
    <name type="ordered locus">Ta1112</name>
</gene>
<reference key="1">
    <citation type="journal article" date="2000" name="Nature">
        <title>The genome sequence of the thermoacidophilic scavenger Thermoplasma acidophilum.</title>
        <authorList>
            <person name="Ruepp A."/>
            <person name="Graml W."/>
            <person name="Santos-Martinez M.-L."/>
            <person name="Koretke K.K."/>
            <person name="Volker C."/>
            <person name="Mewes H.-W."/>
            <person name="Frishman D."/>
            <person name="Stocker S."/>
            <person name="Lupas A.N."/>
            <person name="Baumeister W."/>
        </authorList>
    </citation>
    <scope>NUCLEOTIDE SEQUENCE [LARGE SCALE GENOMIC DNA]</scope>
    <source>
        <strain>ATCC 25905 / DSM 1728 / JCM 9062 / NBRC 15155 / AMRC-C165</strain>
    </source>
</reference>
<evidence type="ECO:0000250" key="1"/>
<evidence type="ECO:0000305" key="2"/>
<accession>Q9HJ60</accession>
<proteinExistence type="inferred from homology"/>
<comment type="function">
    <text evidence="1">Function in general translation initiation by promoting the binding of the formylmethionine-tRNA to ribosomes. Seems to function along with eIF-2 (By similarity).</text>
</comment>
<comment type="similarity">
    <text evidence="2">Belongs to the TRAFAC class translation factor GTPase superfamily. Classic translation factor GTPase family. IF-2 subfamily.</text>
</comment>
<keyword id="KW-0342">GTP-binding</keyword>
<keyword id="KW-0396">Initiation factor</keyword>
<keyword id="KW-0547">Nucleotide-binding</keyword>
<keyword id="KW-0648">Protein biosynthesis</keyword>
<keyword id="KW-1185">Reference proteome</keyword>